<proteinExistence type="predicted"/>
<gene>
    <name type="primary">imm</name>
</gene>
<feature type="chain" id="PRO_0000218702" description="Colicin-E1* immunity protein">
    <location>
        <begin position="1"/>
        <end position="113"/>
    </location>
</feature>
<geneLocation type="plasmid">
    <name>pKY-1</name>
</geneLocation>
<keyword id="KW-0079">Bacteriocin immunity</keyword>
<keyword id="KW-0614">Plasmid</keyword>
<sequence>MSLRYYIKNILFGLYCALIYIYLITKNNEGYYFLASDKMLYAIVISTILCPYSKYAIEHIFFKFIKKDFFRKRKNLNKCPRGKIKPYLCVYNLLCLVLAIPFGLLGLVYINKE</sequence>
<name>IMM1_SHISO</name>
<organism>
    <name type="scientific">Shigella sonnei</name>
    <dbReference type="NCBI Taxonomy" id="624"/>
    <lineage>
        <taxon>Bacteria</taxon>
        <taxon>Pseudomonadati</taxon>
        <taxon>Pseudomonadota</taxon>
        <taxon>Gammaproteobacteria</taxon>
        <taxon>Enterobacterales</taxon>
        <taxon>Enterobacteriaceae</taxon>
        <taxon>Shigella</taxon>
    </lineage>
</organism>
<reference key="1">
    <citation type="journal article" date="1986" name="J. Gen. Appl. Microbiol.">
        <title>The nucleotide sequence of cea and the region of origin of plasmid pKY-1.</title>
        <authorList>
            <person name="Higashi M."/>
            <person name="Hata M."/>
            <person name="Hase T."/>
            <person name="Yamaguchi K."/>
            <person name="Masamune Y."/>
        </authorList>
    </citation>
    <scope>NUCLEOTIDE SEQUENCE [GENOMIC DNA]</scope>
</reference>
<protein>
    <recommendedName>
        <fullName>Colicin-E1* immunity protein</fullName>
    </recommendedName>
    <alternativeName>
        <fullName>ImmE1</fullName>
    </alternativeName>
    <alternativeName>
        <fullName>Microcin-E1* immunity protein</fullName>
    </alternativeName>
</protein>
<accession>P22558</accession>
<dbReference type="EMBL" id="M37218">
    <property type="protein sequence ID" value="AAA98157.1"/>
    <property type="molecule type" value="Genomic_DNA"/>
</dbReference>
<dbReference type="PIR" id="S11532">
    <property type="entry name" value="S11532"/>
</dbReference>
<dbReference type="SMR" id="P22558"/>
<dbReference type="GO" id="GO:0015643">
    <property type="term" value="F:toxic substance binding"/>
    <property type="evidence" value="ECO:0007669"/>
    <property type="project" value="InterPro"/>
</dbReference>
<dbReference type="GO" id="GO:0030153">
    <property type="term" value="P:bacteriocin immunity"/>
    <property type="evidence" value="ECO:0007669"/>
    <property type="project" value="UniProtKB-KW"/>
</dbReference>
<dbReference type="InterPro" id="IPR003061">
    <property type="entry name" value="Microcin"/>
</dbReference>
<dbReference type="Pfam" id="PF03526">
    <property type="entry name" value="Microcin"/>
    <property type="match status" value="1"/>
</dbReference>
<dbReference type="PRINTS" id="PR01298">
    <property type="entry name" value="MICROCIN"/>
</dbReference>
<comment type="function">
    <text>This protein is able to protect a cell, which harbors the plasmid pKY-1 encoding colicin E1*, against colicin E1*.</text>
</comment>